<feature type="chain" id="PRO_1000201344" description="Carboxy-S-adenosyl-L-methionine synthase">
    <location>
        <begin position="1"/>
        <end position="243"/>
    </location>
</feature>
<feature type="binding site" evidence="1">
    <location>
        <position position="39"/>
    </location>
    <ligand>
        <name>S-adenosyl-L-methionine</name>
        <dbReference type="ChEBI" id="CHEBI:59789"/>
    </ligand>
</feature>
<feature type="binding site" evidence="1">
    <location>
        <begin position="64"/>
        <end position="66"/>
    </location>
    <ligand>
        <name>S-adenosyl-L-methionine</name>
        <dbReference type="ChEBI" id="CHEBI:59789"/>
    </ligand>
</feature>
<feature type="binding site" evidence="1">
    <location>
        <position position="132"/>
    </location>
    <ligand>
        <name>S-adenosyl-L-methionine</name>
        <dbReference type="ChEBI" id="CHEBI:59789"/>
    </ligand>
</feature>
<feature type="binding site" evidence="1">
    <location>
        <position position="199"/>
    </location>
    <ligand>
        <name>S-adenosyl-L-methionine</name>
        <dbReference type="ChEBI" id="CHEBI:59789"/>
    </ligand>
</feature>
<accession>B4S0J8</accession>
<accession>F2G3E8</accession>
<proteinExistence type="inferred from homology"/>
<comment type="function">
    <text evidence="1">Catalyzes the conversion of S-adenosyl-L-methionine (SAM) to carboxy-S-adenosyl-L-methionine (Cx-SAM).</text>
</comment>
<comment type="catalytic activity">
    <reaction evidence="1">
        <text>prephenate + S-adenosyl-L-methionine = carboxy-S-adenosyl-L-methionine + 3-phenylpyruvate + H2O</text>
        <dbReference type="Rhea" id="RHEA:51692"/>
        <dbReference type="ChEBI" id="CHEBI:15377"/>
        <dbReference type="ChEBI" id="CHEBI:18005"/>
        <dbReference type="ChEBI" id="CHEBI:29934"/>
        <dbReference type="ChEBI" id="CHEBI:59789"/>
        <dbReference type="ChEBI" id="CHEBI:134278"/>
    </reaction>
</comment>
<comment type="subunit">
    <text evidence="1">Homodimer.</text>
</comment>
<comment type="similarity">
    <text evidence="1">Belongs to the class I-like SAM-binding methyltransferase superfamily. Cx-SAM synthase family.</text>
</comment>
<gene>
    <name evidence="1" type="primary">cmoA</name>
    <name type="ordered locus">MADE_1010910</name>
</gene>
<sequence length="243" mass="26953">MKKHDNIYAKALNKVDDFKFDESVVDVFPDMIQRSVPGYETIVHTIGELAKSSVTPNSMVYDLGCSLGAASLSVSRAVSANTCEIIGVDASSAMVERCRRVVQTFTLPNPISIEQGLAQDVDINNASMVVMNFTLQFIPPSDREGLLASIYKGLNPGGILVLSEKVKHPTRSGNELLIDLHHQFKRDNGYSELEVSQKRAALEKVMLTDTFNEHETRLKKVGFADVVMWYKCYNFTSMVAIKA</sequence>
<organism>
    <name type="scientific">Alteromonas mediterranea (strain DSM 17117 / CIP 110805 / LMG 28347 / Deep ecotype)</name>
    <dbReference type="NCBI Taxonomy" id="1774373"/>
    <lineage>
        <taxon>Bacteria</taxon>
        <taxon>Pseudomonadati</taxon>
        <taxon>Pseudomonadota</taxon>
        <taxon>Gammaproteobacteria</taxon>
        <taxon>Alteromonadales</taxon>
        <taxon>Alteromonadaceae</taxon>
        <taxon>Alteromonas/Salinimonas group</taxon>
        <taxon>Alteromonas</taxon>
    </lineage>
</organism>
<name>CMOA_ALTMD</name>
<keyword id="KW-0949">S-adenosyl-L-methionine</keyword>
<keyword id="KW-0808">Transferase</keyword>
<protein>
    <recommendedName>
        <fullName evidence="1">Carboxy-S-adenosyl-L-methionine synthase</fullName>
        <shortName evidence="1">Cx-SAM synthase</shortName>
        <ecNumber evidence="1">2.1.3.-</ecNumber>
    </recommendedName>
</protein>
<evidence type="ECO:0000255" key="1">
    <source>
        <dbReference type="HAMAP-Rule" id="MF_01589"/>
    </source>
</evidence>
<dbReference type="EC" id="2.1.3.-" evidence="1"/>
<dbReference type="EMBL" id="CP001103">
    <property type="protein sequence ID" value="AEA98320.1"/>
    <property type="molecule type" value="Genomic_DNA"/>
</dbReference>
<dbReference type="RefSeq" id="WP_012518643.1">
    <property type="nucleotide sequence ID" value="NC_011138.3"/>
</dbReference>
<dbReference type="SMR" id="B4S0J8"/>
<dbReference type="GeneID" id="56342613"/>
<dbReference type="KEGG" id="amc:MADE_1010910"/>
<dbReference type="HOGENOM" id="CLU_078475_0_0_6"/>
<dbReference type="Proteomes" id="UP000001870">
    <property type="component" value="Chromosome"/>
</dbReference>
<dbReference type="GO" id="GO:0016743">
    <property type="term" value="F:carboxyl- or carbamoyltransferase activity"/>
    <property type="evidence" value="ECO:0007669"/>
    <property type="project" value="UniProtKB-UniRule"/>
</dbReference>
<dbReference type="GO" id="GO:1904047">
    <property type="term" value="F:S-adenosyl-L-methionine binding"/>
    <property type="evidence" value="ECO:0007669"/>
    <property type="project" value="UniProtKB-UniRule"/>
</dbReference>
<dbReference type="GO" id="GO:0002098">
    <property type="term" value="P:tRNA wobble uridine modification"/>
    <property type="evidence" value="ECO:0007669"/>
    <property type="project" value="InterPro"/>
</dbReference>
<dbReference type="CDD" id="cd02440">
    <property type="entry name" value="AdoMet_MTases"/>
    <property type="match status" value="1"/>
</dbReference>
<dbReference type="Gene3D" id="3.40.50.150">
    <property type="entry name" value="Vaccinia Virus protein VP39"/>
    <property type="match status" value="1"/>
</dbReference>
<dbReference type="HAMAP" id="MF_01589">
    <property type="entry name" value="Cx_SAM_synthase"/>
    <property type="match status" value="1"/>
</dbReference>
<dbReference type="InterPro" id="IPR005271">
    <property type="entry name" value="CmoA"/>
</dbReference>
<dbReference type="InterPro" id="IPR041698">
    <property type="entry name" value="Methyltransf_25"/>
</dbReference>
<dbReference type="InterPro" id="IPR029063">
    <property type="entry name" value="SAM-dependent_MTases_sf"/>
</dbReference>
<dbReference type="NCBIfam" id="TIGR00740">
    <property type="entry name" value="carboxy-S-adenosyl-L-methionine synthase CmoA"/>
    <property type="match status" value="1"/>
</dbReference>
<dbReference type="NCBIfam" id="NF011995">
    <property type="entry name" value="PRK15451.1"/>
    <property type="match status" value="1"/>
</dbReference>
<dbReference type="PANTHER" id="PTHR43861:SF2">
    <property type="entry name" value="CARBOXY-S-ADENOSYL-L-METHIONINE SYNTHASE"/>
    <property type="match status" value="1"/>
</dbReference>
<dbReference type="PANTHER" id="PTHR43861">
    <property type="entry name" value="TRANS-ACONITATE 2-METHYLTRANSFERASE-RELATED"/>
    <property type="match status" value="1"/>
</dbReference>
<dbReference type="Pfam" id="PF13649">
    <property type="entry name" value="Methyltransf_25"/>
    <property type="match status" value="1"/>
</dbReference>
<dbReference type="PIRSF" id="PIRSF006325">
    <property type="entry name" value="MeTrfase_bac"/>
    <property type="match status" value="1"/>
</dbReference>
<dbReference type="SUPFAM" id="SSF53335">
    <property type="entry name" value="S-adenosyl-L-methionine-dependent methyltransferases"/>
    <property type="match status" value="1"/>
</dbReference>
<reference key="1">
    <citation type="journal article" date="2008" name="ISME J.">
        <title>Comparative genomics of two ecotypes of the marine planktonic copiotroph Alteromonas macleodii suggests alternative lifestyles associated with different kinds of particulate organic matter.</title>
        <authorList>
            <person name="Ivars-Martinez E."/>
            <person name="Martin-Cuadrado A.-B."/>
            <person name="D'Auria G."/>
            <person name="Mira A."/>
            <person name="Ferriera S."/>
            <person name="Johnson J."/>
            <person name="Friedman R."/>
            <person name="Rodriguez-Valera F."/>
        </authorList>
    </citation>
    <scope>NUCLEOTIDE SEQUENCE [LARGE SCALE GENOMIC DNA]</scope>
    <source>
        <strain>DSM 17117 / CIP 110805 / LMG 28347 / Deep ecotype</strain>
    </source>
</reference>